<evidence type="ECO:0000250" key="1"/>
<evidence type="ECO:0000305" key="2"/>
<name>POL2_BRSV</name>
<reference key="1">
    <citation type="journal article" date="1986" name="J. Gen. Virol.">
        <title>The nucleotide sequence of tomato black ring virus RNA-2.</title>
        <authorList>
            <person name="Meyer M."/>
            <person name="Hemmer O."/>
            <person name="Mayo M.A."/>
            <person name="Fritsch C."/>
        </authorList>
    </citation>
    <scope>NUCLEOTIDE SEQUENCE [GENOMIC RNA]</scope>
</reference>
<accession>P14547</accession>
<feature type="chain" id="PRO_0000037115" description="Protein 2A" evidence="1">
    <location>
        <begin position="1"/>
        <end position="440" status="uncertain"/>
    </location>
</feature>
<feature type="chain" id="PRO_0000037116" description="Movement protein" evidence="1">
    <location>
        <begin position="441" status="uncertain"/>
        <end position="837"/>
    </location>
</feature>
<feature type="chain" id="PRO_0000037117" description="Coat protein" evidence="1">
    <location>
        <begin position="838"/>
        <end position="1357"/>
    </location>
</feature>
<organism>
    <name type="scientific">Beet ringspot virus</name>
    <name type="common">BRSV</name>
    <name type="synonym">Tomato black ring virus (strain S)</name>
    <dbReference type="NCBI Taxonomy" id="191547"/>
    <lineage>
        <taxon>Viruses</taxon>
        <taxon>Riboviria</taxon>
        <taxon>Orthornavirae</taxon>
        <taxon>Pisuviricota</taxon>
        <taxon>Pisoniviricetes</taxon>
        <taxon>Picornavirales</taxon>
        <taxon>Secoviridae</taxon>
        <taxon>Comovirinae</taxon>
        <taxon>Nepovirus</taxon>
        <taxon>Nepovirus betae</taxon>
    </lineage>
</organism>
<dbReference type="EMBL" id="X04062">
    <property type="protein sequence ID" value="CAA27694.1"/>
    <property type="molecule type" value="Genomic_RNA"/>
</dbReference>
<dbReference type="RefSeq" id="NP_620113.1">
    <property type="nucleotide sequence ID" value="NC_003694.1"/>
</dbReference>
<dbReference type="SMR" id="P14547"/>
<dbReference type="GeneID" id="988050"/>
<dbReference type="KEGG" id="vg:988050"/>
<dbReference type="Proteomes" id="UP000007615">
    <property type="component" value="Genome"/>
</dbReference>
<dbReference type="GO" id="GO:0030430">
    <property type="term" value="C:host cell cytoplasm"/>
    <property type="evidence" value="ECO:0007669"/>
    <property type="project" value="UniProtKB-SubCell"/>
</dbReference>
<dbReference type="GO" id="GO:0042025">
    <property type="term" value="C:host cell nucleus"/>
    <property type="evidence" value="ECO:0007669"/>
    <property type="project" value="UniProtKB-SubCell"/>
</dbReference>
<dbReference type="GO" id="GO:0044219">
    <property type="term" value="C:host cell plasmodesma"/>
    <property type="evidence" value="ECO:0007669"/>
    <property type="project" value="UniProtKB-SubCell"/>
</dbReference>
<dbReference type="GO" id="GO:0019028">
    <property type="term" value="C:viral capsid"/>
    <property type="evidence" value="ECO:0007669"/>
    <property type="project" value="UniProtKB-KW"/>
</dbReference>
<dbReference type="GO" id="GO:0005198">
    <property type="term" value="F:structural molecule activity"/>
    <property type="evidence" value="ECO:0007669"/>
    <property type="project" value="InterPro"/>
</dbReference>
<dbReference type="GO" id="GO:0046740">
    <property type="term" value="P:transport of virus in host, cell to cell"/>
    <property type="evidence" value="ECO:0007669"/>
    <property type="project" value="UniProtKB-KW"/>
</dbReference>
<dbReference type="Gene3D" id="2.60.120.20">
    <property type="match status" value="2"/>
</dbReference>
<dbReference type="InterPro" id="IPR005054">
    <property type="entry name" value="Nepo_coat"/>
</dbReference>
<dbReference type="InterPro" id="IPR005305">
    <property type="entry name" value="Nepo_coat_C"/>
</dbReference>
<dbReference type="InterPro" id="IPR005306">
    <property type="entry name" value="Nepo_coat_N"/>
</dbReference>
<dbReference type="InterPro" id="IPR029053">
    <property type="entry name" value="Viral_coat"/>
</dbReference>
<dbReference type="Pfam" id="PF03391">
    <property type="entry name" value="Nepo_coat"/>
    <property type="match status" value="1"/>
</dbReference>
<dbReference type="Pfam" id="PF03688">
    <property type="entry name" value="Nepo_coat_C"/>
    <property type="match status" value="1"/>
</dbReference>
<dbReference type="Pfam" id="PF03689">
    <property type="entry name" value="Nepo_coat_N"/>
    <property type="match status" value="1"/>
</dbReference>
<dbReference type="SUPFAM" id="SSF88633">
    <property type="entry name" value="Positive stranded ssRNA viruses"/>
    <property type="match status" value="3"/>
</dbReference>
<keyword id="KW-0167">Capsid protein</keyword>
<keyword id="KW-1031">Host cell junction</keyword>
<keyword id="KW-1035">Host cytoplasm</keyword>
<keyword id="KW-1048">Host nucleus</keyword>
<keyword id="KW-0813">Transport</keyword>
<keyword id="KW-0916">Viral movement protein</keyword>
<keyword id="KW-0946">Virion</keyword>
<protein>
    <recommendedName>
        <fullName>RNA2 polyprotein</fullName>
    </recommendedName>
    <alternativeName>
        <fullName>P2</fullName>
    </alternativeName>
    <component>
        <recommendedName>
            <fullName>Protein 2A</fullName>
            <shortName>P2A</shortName>
        </recommendedName>
    </component>
    <component>
        <recommendedName>
            <fullName>Movement protein</fullName>
        </recommendedName>
        <alternativeName>
            <fullName>2B-MP</fullName>
        </alternativeName>
    </component>
    <component>
        <recommendedName>
            <fullName>Coat protein</fullName>
        </recommendedName>
        <alternativeName>
            <fullName>2C-CP</fullName>
        </alternativeName>
    </component>
</protein>
<proteinExistence type="inferred from homology"/>
<sequence length="1357" mass="150010">MGFRELFASSLGDAARAKASLVRGMSGWLNTTLATVQAAGPEIRACAYSALWAEVDSVKELVPLSATMLLNQLRADLKCAQVRAQKCTPASTSRFCSCGGIPLPGENKWEDELVPIPDCPVGRNFCRDGVFCKRHHGPGETLERVQVLVEAPKCPHCQGTGIIPRSEPMAYIRSEYERQTKTFARPSNPLHEWILEEGRESNHARRCSNWYHMSMSQIDKRDNDPCDASTWMAAAQILFDNADAQVYYPGSNYRKLVGGSKGYDDWCQLPPSKEMCNRLFDWWHRQNTPDYYVSEDTLADFVKPRMGSCHLPIEHDVHLLPREWHGRVSAGNTSHFMACLDGLSSSMEEFLDVFYDCAAQFNGDIEIFLDTNEKPSRVVGNLGGVRVLLTTPAVCSPAKLLPEIEESDFDQLEDESISCDSMIPPLFRDNGLSALYANLVLKQATVQSILMAHPDQDEIEDQVDHLENKQGGEIVTTPAFIKMLKEKRKEVRGKEFAEGSEGRLVRASDLTLSREDVFLSGGLFEKFRKSGIVQTFKGKDPKLTKVCVDLTNSQEIIKYPSKEMCSDSSGVHTGQVFTVLNRPLYNELNKLAESGWKEAKSVCLNLHIRSYVPVHTPLYAFCVIMWGHSSDAETASLCGAGVYLGDQEAAVLELPLVCSYLGNSLEDFDAYKRSLVLSTVFFGKSGLFAGQNVFGITAVEFTEYMPTSYGGITHERDSWQAMLRNHQGKDKGRFIAGFNVVDALERDKEEPIKMPNLDLEPVPRTQPIVRTFTGEGKQPLLNKSRSMRIQSFVSFRGSNIPVGRRIDNTAEAINYELGRASTSSVSSRLDESKCNLKAGGSYAFGETIELPATVTPGTVLAVFNIFDKIQETNTKVCSKWLEQGYVSQNLTAISHLAPNAFSGIAIWYIFDAYGKIPGDVTTTFELEMARSFDPHVQVLRDVSTSTWVIDFHKICGQTLNFSGQGYCVPKIWVIAASTFQLARSTATKFRLEFYTRGEKLVRGLAEQPLSYPIEARHLTDLNLMLAPKQIAVGTYAMITFPVSLAAKLQSTSGRTAYSYAAGLLSHFLGVGGTIHFVVRTTSSAFVTSKLRIALWGTVPETDQLAQMPHVDVEVNVDASLQIQSPFFSTANFGNSGSAFYVSTLCAPMAPETVETGSEYYIQIKGIEANPGLCREINYKQRFAWCLLECLDNSKASPIKVKIPSRIGNLSSKHVKVTNFVNALAILCATTGMHHGNCTIHFSWLWHPAELGKQLGRLKFVQGMGINNEHIGDTMCYNSLSNTHSVPFQFGSFAGPITSGGKADEAENWIEIQSPDFSWVASLHVSIEVHEGFKFYGRSAGPLTIPATVADVSAVSGS</sequence>
<organismHost>
    <name type="scientific">Allium porrum</name>
    <name type="common">Leek</name>
    <name type="synonym">Allium ampeloprasum var. porrum</name>
    <dbReference type="NCBI Taxonomy" id="4681"/>
</organismHost>
<organismHost>
    <name type="scientific">Apium graveolens</name>
    <name type="common">Celery</name>
    <dbReference type="NCBI Taxonomy" id="4045"/>
</organismHost>
<organismHost>
    <name type="scientific">Beta vulgaris</name>
    <name type="common">Sugar beet</name>
    <dbReference type="NCBI Taxonomy" id="161934"/>
</organismHost>
<organismHost>
    <name type="scientific">Fraxinus</name>
    <name type="common">ash trees</name>
    <dbReference type="NCBI Taxonomy" id="38871"/>
</organismHost>
<organismHost>
    <name type="scientific">Lactuca sativa</name>
    <name type="common">Garden lettuce</name>
    <dbReference type="NCBI Taxonomy" id="4236"/>
</organismHost>
<organismHost>
    <name type="scientific">Narcissus pseudonarcissus</name>
    <name type="common">Daffodil</name>
    <dbReference type="NCBI Taxonomy" id="39639"/>
</organismHost>
<organismHost>
    <name type="scientific">Phaseolus vulgaris</name>
    <name type="common">Kidney bean</name>
    <name type="synonym">French bean</name>
    <dbReference type="NCBI Taxonomy" id="3885"/>
</organismHost>
<organismHost>
    <name type="scientific">Robinia pseudoacacia</name>
    <name type="common">Black locust</name>
    <dbReference type="NCBI Taxonomy" id="35938"/>
</organismHost>
<organismHost>
    <name type="scientific">Rubus</name>
    <name type="common">bramble</name>
    <dbReference type="NCBI Taxonomy" id="23216"/>
</organismHost>
<organismHost>
    <name type="scientific">Solanum lycopersicum</name>
    <name type="common">Tomato</name>
    <name type="synonym">Lycopersicon esculentum</name>
    <dbReference type="NCBI Taxonomy" id="4081"/>
</organismHost>
<organismHost>
    <name type="scientific">Solanum tuberosum</name>
    <name type="common">Potato</name>
    <dbReference type="NCBI Taxonomy" id="4113"/>
</organismHost>
<organismHost>
    <name type="scientific">Tulipa</name>
    <dbReference type="NCBI Taxonomy" id="13305"/>
</organismHost>
<organismHost>
    <name type="scientific">Vitis</name>
    <dbReference type="NCBI Taxonomy" id="3603"/>
</organismHost>
<comment type="function">
    <molecule>Protein 2A</molecule>
    <text evidence="1">Implicated in RNA2 replication. Could also be required for nematode transmission of the virus (By similarity).</text>
</comment>
<comment type="function">
    <molecule>Movement protein</molecule>
    <text evidence="1">Transports viral genome to neighboring plant cells directly through plasmosdesmata, without any budding. The movement protein allows efficient cell to cell propagation, by bypassing the host cell wall barrier. Acts by forming a tubular structure at the host plasmodesmata, enlarging it enough to allow free passage of virion capsids (By similarity).</text>
</comment>
<comment type="subcellular location">
    <subcellularLocation>
        <location>Host cell junction</location>
        <location>Host plasmodesma</location>
    </subcellularLocation>
    <text evidence="1">Assembles in tubules that are embedded within modified plasmodesmata (By similarity). Movement proteins are targeted preferentially to calreticulin-labeled foci within the youngest cross walls, where they assemble into tubules. During cell division, they colocalize in the cell plate with KNOLLE, a cytokinesis-specific syntaxin (By similarity).</text>
</comment>
<comment type="subcellular location">
    <molecule>Protein 2A</molecule>
    <subcellularLocation>
        <location evidence="1">Host cytoplasm</location>
    </subcellularLocation>
    <subcellularLocation>
        <location evidence="1">Host nucleus</location>
    </subcellularLocation>
    <text evidence="1">Cytoplasmic early in infection. Later in infection, it becomes progressively concentrated around the nucleus, where it forms large aggregates (By similarity).</text>
</comment>
<comment type="subcellular location">
    <molecule>Coat protein</molecule>
    <subcellularLocation>
        <location evidence="2">Virion</location>
    </subcellularLocation>
</comment>
<comment type="PTM">
    <text evidence="1">Specific enzymatic cleavages in vivo by the P1 encoded 3C-like protease yield mature proteins.</text>
</comment>
<comment type="miscellaneous">
    <text>Virions are comprised of 60 copies of the coat protein.</text>
</comment>
<comment type="similarity">
    <text evidence="2">Belongs to the nepoviruses RNA2 polyprotein family.</text>
</comment>